<dbReference type="EC" id="2.7.1.209" evidence="5 8"/>
<dbReference type="EMBL" id="CP000480">
    <property type="protein sequence ID" value="ABK72124.1"/>
    <property type="molecule type" value="Genomic_DNA"/>
</dbReference>
<dbReference type="EMBL" id="CP001663">
    <property type="protein sequence ID" value="AFP43031.1"/>
    <property type="molecule type" value="Genomic_DNA"/>
</dbReference>
<dbReference type="RefSeq" id="WP_003898168.1">
    <property type="nucleotide sequence ID" value="NZ_SIJM01000001.1"/>
</dbReference>
<dbReference type="RefSeq" id="YP_890996.1">
    <property type="nucleotide sequence ID" value="NC_008596.1"/>
</dbReference>
<dbReference type="SMR" id="A0R758"/>
<dbReference type="STRING" id="246196.MSMEG_6788"/>
<dbReference type="PaxDb" id="246196-MSMEI_6605"/>
<dbReference type="KEGG" id="msb:LJ00_33540"/>
<dbReference type="KEGG" id="msg:MSMEI_6605"/>
<dbReference type="KEGG" id="msm:MSMEG_6788"/>
<dbReference type="PATRIC" id="fig|246196.19.peg.6608"/>
<dbReference type="eggNOG" id="COG2376">
    <property type="taxonomic scope" value="Bacteria"/>
</dbReference>
<dbReference type="OrthoDB" id="9806345at2"/>
<dbReference type="BioCyc" id="MetaCyc:MONOMER-19893"/>
<dbReference type="BRENDA" id="2.7.1.209">
    <property type="organism ID" value="3512"/>
</dbReference>
<dbReference type="UniPathway" id="UPA01067"/>
<dbReference type="Proteomes" id="UP000000757">
    <property type="component" value="Chromosome"/>
</dbReference>
<dbReference type="Proteomes" id="UP000006158">
    <property type="component" value="Chromosome"/>
</dbReference>
<dbReference type="GO" id="GO:0005829">
    <property type="term" value="C:cytosol"/>
    <property type="evidence" value="ECO:0007669"/>
    <property type="project" value="TreeGrafter"/>
</dbReference>
<dbReference type="GO" id="GO:0005524">
    <property type="term" value="F:ATP binding"/>
    <property type="evidence" value="ECO:0007669"/>
    <property type="project" value="UniProtKB-KW"/>
</dbReference>
<dbReference type="GO" id="GO:0030246">
    <property type="term" value="F:carbohydrate binding"/>
    <property type="evidence" value="ECO:0000314"/>
    <property type="project" value="UniProtKB"/>
</dbReference>
<dbReference type="GO" id="GO:0019200">
    <property type="term" value="F:carbohydrate kinase activity"/>
    <property type="evidence" value="ECO:0000314"/>
    <property type="project" value="UniProtKB"/>
</dbReference>
<dbReference type="GO" id="GO:0004371">
    <property type="term" value="F:glycerone kinase activity"/>
    <property type="evidence" value="ECO:0007669"/>
    <property type="project" value="InterPro"/>
</dbReference>
<dbReference type="GO" id="GO:0016052">
    <property type="term" value="P:carbohydrate catabolic process"/>
    <property type="evidence" value="ECO:0000315"/>
    <property type="project" value="UniProtKB"/>
</dbReference>
<dbReference type="GO" id="GO:0009758">
    <property type="term" value="P:carbohydrate utilization"/>
    <property type="evidence" value="ECO:0000315"/>
    <property type="project" value="UniProtKB"/>
</dbReference>
<dbReference type="GO" id="GO:0071322">
    <property type="term" value="P:cellular response to carbohydrate stimulus"/>
    <property type="evidence" value="ECO:0000314"/>
    <property type="project" value="UniProtKB"/>
</dbReference>
<dbReference type="GO" id="GO:0019563">
    <property type="term" value="P:glycerol catabolic process"/>
    <property type="evidence" value="ECO:0007669"/>
    <property type="project" value="TreeGrafter"/>
</dbReference>
<dbReference type="FunFam" id="3.30.1180.20:FF:000001">
    <property type="entry name" value="Dihydroxyacetone kinase 1"/>
    <property type="match status" value="1"/>
</dbReference>
<dbReference type="FunFam" id="1.25.40.340:FF:000002">
    <property type="entry name" value="Dihydroxyacetone kinase, L subunit"/>
    <property type="match status" value="1"/>
</dbReference>
<dbReference type="FunFam" id="3.40.50.10440:FF:000003">
    <property type="entry name" value="Homodimeric dihydroxyacetone kinase"/>
    <property type="match status" value="1"/>
</dbReference>
<dbReference type="Gene3D" id="1.25.40.340">
    <property type="match status" value="1"/>
</dbReference>
<dbReference type="Gene3D" id="3.40.50.10440">
    <property type="entry name" value="Dihydroxyacetone kinase, domain 1"/>
    <property type="match status" value="1"/>
</dbReference>
<dbReference type="Gene3D" id="3.30.1180.20">
    <property type="entry name" value="Dihydroxyacetone kinase, domain 2"/>
    <property type="match status" value="1"/>
</dbReference>
<dbReference type="InterPro" id="IPR004006">
    <property type="entry name" value="DhaK_dom"/>
</dbReference>
<dbReference type="InterPro" id="IPR004007">
    <property type="entry name" value="DhaL_dom"/>
</dbReference>
<dbReference type="InterPro" id="IPR036117">
    <property type="entry name" value="DhaL_dom_sf"/>
</dbReference>
<dbReference type="InterPro" id="IPR050861">
    <property type="entry name" value="Dihydroxyacetone_Kinase"/>
</dbReference>
<dbReference type="NCBIfam" id="NF011049">
    <property type="entry name" value="PRK14479.1"/>
    <property type="match status" value="1"/>
</dbReference>
<dbReference type="PANTHER" id="PTHR28629">
    <property type="entry name" value="TRIOKINASE/FMN CYCLASE"/>
    <property type="match status" value="1"/>
</dbReference>
<dbReference type="PANTHER" id="PTHR28629:SF4">
    <property type="entry name" value="TRIOKINASE_FMN CYCLASE"/>
    <property type="match status" value="1"/>
</dbReference>
<dbReference type="Pfam" id="PF02733">
    <property type="entry name" value="Dak1"/>
    <property type="match status" value="1"/>
</dbReference>
<dbReference type="Pfam" id="PF02734">
    <property type="entry name" value="Dak2"/>
    <property type="match status" value="1"/>
</dbReference>
<dbReference type="SMART" id="SM01120">
    <property type="entry name" value="Dak2"/>
    <property type="match status" value="1"/>
</dbReference>
<dbReference type="SUPFAM" id="SSF82549">
    <property type="entry name" value="DAK1/DegV-like"/>
    <property type="match status" value="1"/>
</dbReference>
<dbReference type="SUPFAM" id="SSF101473">
    <property type="entry name" value="DhaL-like"/>
    <property type="match status" value="1"/>
</dbReference>
<dbReference type="PROSITE" id="PS51481">
    <property type="entry name" value="DHAK"/>
    <property type="match status" value="1"/>
</dbReference>
<dbReference type="PROSITE" id="PS51480">
    <property type="entry name" value="DHAL"/>
    <property type="match status" value="1"/>
</dbReference>
<organism>
    <name type="scientific">Mycolicibacterium smegmatis (strain ATCC 700084 / mc(2)155)</name>
    <name type="common">Mycobacterium smegmatis</name>
    <dbReference type="NCBI Taxonomy" id="246196"/>
    <lineage>
        <taxon>Bacteria</taxon>
        <taxon>Bacillati</taxon>
        <taxon>Actinomycetota</taxon>
        <taxon>Actinomycetes</taxon>
        <taxon>Mycobacteriales</taxon>
        <taxon>Mycobacteriaceae</taxon>
        <taxon>Mycolicibacterium</taxon>
    </lineage>
</organism>
<proteinExistence type="evidence at protein level"/>
<sequence length="571" mass="59357">MTYLLNSPDDFADEAVRGLVAANPDLLTEVPGGVVRSTETPKGQPALVIGGGSGHYPAFAGWVGPGMGHGAPCGNIFSSPSASEVYSVVRNAENGGGVILGFGNYAGDVLHFGLAAEKLRHEGIDVRIVTVSDDIASNSPENHRDRRGVAGDLPVFKIAGAAIEAGADLDEAERVAWKANDATRSFGLAFEGCTLPGATEPLFHVEKGWMGVGLGIHGEPGVRDNRLGTAAEVADMLFDEVTAEEPPRGENGYDGRVAVILNGLGTVKYEELFVVYGRIAERLAQQGFTVVRPEVGEFVTSLDMAGVSLTMVFLDDELERLWTAPVETPAYRRGAMPAVDRTPRTTTWDAAETTIPEASEGSRECARNIVAVLETFQQVCADNEAELGRIDAVAGDGDHGQGMSFGSRGAAQAARDAVDRNAGARTTLLLAGQAWADAAGGTSGALWGAALTSAGGVFSDTDGADEQAAVDAICAGIDAILRLGGAQPGDKTMVDAAVPFRDALVKAFDTQAGPAITSAARVAREAAEKTADITARRGRARVLGEKSVGTPDPGALSFAMLMKALGEHLTR</sequence>
<name>LERK_MYCS2</name>
<keyword id="KW-0067">ATP-binding</keyword>
<keyword id="KW-0119">Carbohydrate metabolism</keyword>
<keyword id="KW-0418">Kinase</keyword>
<keyword id="KW-0547">Nucleotide-binding</keyword>
<keyword id="KW-1185">Reference proteome</keyword>
<keyword id="KW-0808">Transferase</keyword>
<gene>
    <name evidence="7" type="primary">lerK</name>
    <name evidence="9" type="ordered locus">MSMEG_6788</name>
    <name evidence="10" type="ordered locus">MSMEI_6605</name>
</gene>
<comment type="function">
    <text evidence="5 6">Kinase that has a preference for L-erythrulose, producing L-erythrulose-1P. Involved in the degradation pathway of L-threitol, that allows M.smegmatis to grow on this compound as the sole carbon source. Is also able to phosphorylate D-erythrulose and dihydroxyacetone in vitro.</text>
</comment>
<comment type="catalytic activity">
    <reaction evidence="5 8">
        <text>L-erythrulose + ATP = L-erythrulose 1-phosphate + ADP + H(+)</text>
        <dbReference type="Rhea" id="RHEA:48780"/>
        <dbReference type="ChEBI" id="CHEBI:15378"/>
        <dbReference type="ChEBI" id="CHEBI:27913"/>
        <dbReference type="ChEBI" id="CHEBI:30616"/>
        <dbReference type="ChEBI" id="CHEBI:58002"/>
        <dbReference type="ChEBI" id="CHEBI:456216"/>
        <dbReference type="EC" id="2.7.1.209"/>
    </reaction>
</comment>
<comment type="biophysicochemical properties">
    <kinetics>
        <KM evidence="5">3 uM for L-erythrulose</KM>
        <KM evidence="5">10.6 uM for D-erythrulose</KM>
        <KM evidence="5">37.8 uM for dihydroxyacetone</KM>
        <text evidence="5">kcat is 1.79 sec(-1) with L-erythrulose as substrate. kcat is 1.60 sec(-1) with D-erythrulose as substrate. kcat is 2.12 sec(-1) with dihydroxyacetone as substrate.</text>
    </kinetics>
</comment>
<comment type="pathway">
    <text evidence="5">Carbohydrate metabolism; L-threitol degradation.</text>
</comment>
<comment type="induction">
    <text evidence="5">Slightly up-regulated during growth on L-threitol relative to growth on glycerol.</text>
</comment>
<comment type="disruption phenotype">
    <text evidence="5">Cells lacking this gene are totally unable to grow on L-threitol.</text>
</comment>
<comment type="caution">
    <text evidence="5 6">The product of the reaction was originally identified as L-erythrulose 4-phosphate (PubMed:26560079). It was then corrected to L-erythrulose 1-phosphate by the same group (PubMed:26978037).</text>
</comment>
<evidence type="ECO:0000250" key="1">
    <source>
        <dbReference type="UniProtKB" id="P76014"/>
    </source>
</evidence>
<evidence type="ECO:0000250" key="2">
    <source>
        <dbReference type="UniProtKB" id="P76015"/>
    </source>
</evidence>
<evidence type="ECO:0000255" key="3">
    <source>
        <dbReference type="PROSITE-ProRule" id="PRU00813"/>
    </source>
</evidence>
<evidence type="ECO:0000255" key="4">
    <source>
        <dbReference type="PROSITE-ProRule" id="PRU00814"/>
    </source>
</evidence>
<evidence type="ECO:0000269" key="5">
    <source>
    </source>
</evidence>
<evidence type="ECO:0000269" key="6">
    <source>
    </source>
</evidence>
<evidence type="ECO:0000303" key="7">
    <source>
    </source>
</evidence>
<evidence type="ECO:0000305" key="8">
    <source>
    </source>
</evidence>
<evidence type="ECO:0000312" key="9">
    <source>
        <dbReference type="EMBL" id="ABK72124.1"/>
    </source>
</evidence>
<evidence type="ECO:0000312" key="10">
    <source>
        <dbReference type="EMBL" id="AFP43031.1"/>
    </source>
</evidence>
<protein>
    <recommendedName>
        <fullName evidence="8">L-erythrulose 1-kinase</fullName>
        <ecNumber evidence="5 8">2.7.1.209</ecNumber>
    </recommendedName>
</protein>
<accession>A0R758</accession>
<feature type="chain" id="PRO_0000435516" description="L-erythrulose 1-kinase">
    <location>
        <begin position="1"/>
        <end position="571"/>
    </location>
</feature>
<feature type="domain" description="DhaK" evidence="4">
    <location>
        <begin position="7"/>
        <end position="331"/>
    </location>
</feature>
<feature type="domain" description="DhaL" evidence="3">
    <location>
        <begin position="367"/>
        <end position="567"/>
    </location>
</feature>
<feature type="active site" description="Tele-hemiaminal-histidine intermediate" evidence="2">
    <location>
        <position position="217"/>
    </location>
</feature>
<feature type="binding site" evidence="1">
    <location>
        <begin position="396"/>
        <end position="402"/>
    </location>
    <ligand>
        <name>ATP</name>
        <dbReference type="ChEBI" id="CHEBI:30616"/>
    </ligand>
</feature>
<feature type="binding site" evidence="1">
    <location>
        <begin position="442"/>
        <end position="443"/>
    </location>
    <ligand>
        <name>ATP</name>
        <dbReference type="ChEBI" id="CHEBI:30616"/>
    </ligand>
</feature>
<feature type="binding site" evidence="1">
    <location>
        <position position="484"/>
    </location>
    <ligand>
        <name>ATP</name>
        <dbReference type="ChEBI" id="CHEBI:30616"/>
    </ligand>
</feature>
<feature type="binding site" evidence="1">
    <location>
        <position position="539"/>
    </location>
    <ligand>
        <name>ATP</name>
        <dbReference type="ChEBI" id="CHEBI:30616"/>
    </ligand>
</feature>
<feature type="binding site" evidence="1">
    <location>
        <begin position="552"/>
        <end position="554"/>
    </location>
    <ligand>
        <name>ATP</name>
        <dbReference type="ChEBI" id="CHEBI:30616"/>
    </ligand>
</feature>
<reference key="1">
    <citation type="submission" date="2006-10" db="EMBL/GenBank/DDBJ databases">
        <authorList>
            <person name="Fleischmann R.D."/>
            <person name="Dodson R.J."/>
            <person name="Haft D.H."/>
            <person name="Merkel J.S."/>
            <person name="Nelson W.C."/>
            <person name="Fraser C.M."/>
        </authorList>
    </citation>
    <scope>NUCLEOTIDE SEQUENCE [LARGE SCALE GENOMIC DNA]</scope>
    <source>
        <strain>ATCC 700084 / mc(2)155</strain>
    </source>
</reference>
<reference key="2">
    <citation type="journal article" date="2007" name="Genome Biol.">
        <title>Interrupted coding sequences in Mycobacterium smegmatis: authentic mutations or sequencing errors?</title>
        <authorList>
            <person name="Deshayes C."/>
            <person name="Perrodou E."/>
            <person name="Gallien S."/>
            <person name="Euphrasie D."/>
            <person name="Schaeffer C."/>
            <person name="Van-Dorsselaer A."/>
            <person name="Poch O."/>
            <person name="Lecompte O."/>
            <person name="Reyrat J.-M."/>
        </authorList>
    </citation>
    <scope>NUCLEOTIDE SEQUENCE [LARGE SCALE GENOMIC DNA]</scope>
    <source>
        <strain>ATCC 700084 / mc(2)155</strain>
    </source>
</reference>
<reference key="3">
    <citation type="journal article" date="2009" name="Genome Res.">
        <title>Ortho-proteogenomics: multiple proteomes investigation through orthology and a new MS-based protocol.</title>
        <authorList>
            <person name="Gallien S."/>
            <person name="Perrodou E."/>
            <person name="Carapito C."/>
            <person name="Deshayes C."/>
            <person name="Reyrat J.-M."/>
            <person name="Van Dorsselaer A."/>
            <person name="Poch O."/>
            <person name="Schaeffer C."/>
            <person name="Lecompte O."/>
        </authorList>
    </citation>
    <scope>NUCLEOTIDE SEQUENCE [LARGE SCALE GENOMIC DNA]</scope>
    <source>
        <strain>ATCC 700084 / mc(2)155</strain>
    </source>
</reference>
<reference key="4">
    <citation type="journal article" date="2015" name="J. Am. Chem. Soc.">
        <title>A general strategy for the discovery of metabolic pathways: D-threitol, L-threitol, and erythritol utilization in Mycobacterium smegmatis.</title>
        <authorList>
            <person name="Huang H."/>
            <person name="Carter M.S."/>
            <person name="Vetting M.W."/>
            <person name="Al-Obaidi N."/>
            <person name="Patskovsky Y."/>
            <person name="Almo S.C."/>
            <person name="Gerlt J.A."/>
        </authorList>
    </citation>
    <scope>FUNCTION</scope>
    <scope>CATALYTIC ACTIVITY</scope>
    <scope>SUBSTRATE SPECIFICITY</scope>
    <scope>BIOPHYSICOCHEMICAL PROPERTIES</scope>
    <scope>INDUCTION</scope>
    <scope>DISRUPTION PHENOTYPE</scope>
    <scope>PATHWAY</scope>
    <source>
        <strain>ATCC 700084 / mc(2)155</strain>
    </source>
</reference>
<reference key="5">
    <citation type="journal article" date="2016" name="J. Am. Chem. Soc.">
        <title>Correction to 'A general strategy for the discovery of metabolic pathways: D-threitol, L-threitol, and erythritol utilization in Mycobacterium smegmatis'.</title>
        <authorList>
            <person name="Huang H."/>
            <person name="Carter M.S."/>
            <person name="Vetting M.W."/>
            <person name="Al-Obaidi N."/>
            <person name="Patskovsky Y."/>
            <person name="Almo S.C."/>
            <person name="Gerlt J.A."/>
        </authorList>
    </citation>
    <scope>ERRATUM OF PUBMED:26560079</scope>
    <scope>CORRECTION TO PRODUCT IDENTIFICATION</scope>
</reference>